<proteinExistence type="inferred from homology"/>
<dbReference type="EMBL" id="CP001124">
    <property type="protein sequence ID" value="ACH37034.1"/>
    <property type="molecule type" value="Genomic_DNA"/>
</dbReference>
<dbReference type="RefSeq" id="WP_012528443.1">
    <property type="nucleotide sequence ID" value="NC_011146.1"/>
</dbReference>
<dbReference type="SMR" id="B5E7P6"/>
<dbReference type="STRING" id="404380.Gbem_0001"/>
<dbReference type="KEGG" id="gbm:Gbem_0001"/>
<dbReference type="eggNOG" id="COG0593">
    <property type="taxonomic scope" value="Bacteria"/>
</dbReference>
<dbReference type="HOGENOM" id="CLU_026910_3_1_7"/>
<dbReference type="OrthoDB" id="9807019at2"/>
<dbReference type="Proteomes" id="UP000008825">
    <property type="component" value="Chromosome"/>
</dbReference>
<dbReference type="GO" id="GO:0005737">
    <property type="term" value="C:cytoplasm"/>
    <property type="evidence" value="ECO:0007669"/>
    <property type="project" value="UniProtKB-SubCell"/>
</dbReference>
<dbReference type="GO" id="GO:0005886">
    <property type="term" value="C:plasma membrane"/>
    <property type="evidence" value="ECO:0007669"/>
    <property type="project" value="TreeGrafter"/>
</dbReference>
<dbReference type="GO" id="GO:0005524">
    <property type="term" value="F:ATP binding"/>
    <property type="evidence" value="ECO:0007669"/>
    <property type="project" value="UniProtKB-UniRule"/>
</dbReference>
<dbReference type="GO" id="GO:0016887">
    <property type="term" value="F:ATP hydrolysis activity"/>
    <property type="evidence" value="ECO:0007669"/>
    <property type="project" value="InterPro"/>
</dbReference>
<dbReference type="GO" id="GO:0003688">
    <property type="term" value="F:DNA replication origin binding"/>
    <property type="evidence" value="ECO:0007669"/>
    <property type="project" value="UniProtKB-UniRule"/>
</dbReference>
<dbReference type="GO" id="GO:0008289">
    <property type="term" value="F:lipid binding"/>
    <property type="evidence" value="ECO:0007669"/>
    <property type="project" value="UniProtKB-KW"/>
</dbReference>
<dbReference type="GO" id="GO:0006270">
    <property type="term" value="P:DNA replication initiation"/>
    <property type="evidence" value="ECO:0007669"/>
    <property type="project" value="UniProtKB-UniRule"/>
</dbReference>
<dbReference type="GO" id="GO:0006275">
    <property type="term" value="P:regulation of DNA replication"/>
    <property type="evidence" value="ECO:0007669"/>
    <property type="project" value="UniProtKB-UniRule"/>
</dbReference>
<dbReference type="CDD" id="cd00009">
    <property type="entry name" value="AAA"/>
    <property type="match status" value="1"/>
</dbReference>
<dbReference type="CDD" id="cd06571">
    <property type="entry name" value="Bac_DnaA_C"/>
    <property type="match status" value="1"/>
</dbReference>
<dbReference type="FunFam" id="1.10.8.60:FF:000003">
    <property type="entry name" value="Chromosomal replication initiator protein DnaA"/>
    <property type="match status" value="1"/>
</dbReference>
<dbReference type="FunFam" id="3.40.50.300:FF:000150">
    <property type="entry name" value="Chromosomal replication initiator protein DnaA"/>
    <property type="match status" value="1"/>
</dbReference>
<dbReference type="Gene3D" id="1.10.1750.10">
    <property type="match status" value="1"/>
</dbReference>
<dbReference type="Gene3D" id="1.10.8.60">
    <property type="match status" value="1"/>
</dbReference>
<dbReference type="Gene3D" id="3.30.300.180">
    <property type="match status" value="1"/>
</dbReference>
<dbReference type="Gene3D" id="3.40.50.300">
    <property type="entry name" value="P-loop containing nucleotide triphosphate hydrolases"/>
    <property type="match status" value="1"/>
</dbReference>
<dbReference type="HAMAP" id="MF_00377">
    <property type="entry name" value="DnaA_bact"/>
    <property type="match status" value="1"/>
</dbReference>
<dbReference type="InterPro" id="IPR003593">
    <property type="entry name" value="AAA+_ATPase"/>
</dbReference>
<dbReference type="InterPro" id="IPR001957">
    <property type="entry name" value="Chromosome_initiator_DnaA"/>
</dbReference>
<dbReference type="InterPro" id="IPR020591">
    <property type="entry name" value="Chromosome_initiator_DnaA-like"/>
</dbReference>
<dbReference type="InterPro" id="IPR018312">
    <property type="entry name" value="Chromosome_initiator_DnaA_CS"/>
</dbReference>
<dbReference type="InterPro" id="IPR013159">
    <property type="entry name" value="DnaA_C"/>
</dbReference>
<dbReference type="InterPro" id="IPR013317">
    <property type="entry name" value="DnaA_dom"/>
</dbReference>
<dbReference type="InterPro" id="IPR024633">
    <property type="entry name" value="DnaA_N_dom"/>
</dbReference>
<dbReference type="InterPro" id="IPR038454">
    <property type="entry name" value="DnaA_N_sf"/>
</dbReference>
<dbReference type="InterPro" id="IPR027417">
    <property type="entry name" value="P-loop_NTPase"/>
</dbReference>
<dbReference type="InterPro" id="IPR010921">
    <property type="entry name" value="Trp_repressor/repl_initiator"/>
</dbReference>
<dbReference type="NCBIfam" id="TIGR00362">
    <property type="entry name" value="DnaA"/>
    <property type="match status" value="1"/>
</dbReference>
<dbReference type="PANTHER" id="PTHR30050">
    <property type="entry name" value="CHROMOSOMAL REPLICATION INITIATOR PROTEIN DNAA"/>
    <property type="match status" value="1"/>
</dbReference>
<dbReference type="PANTHER" id="PTHR30050:SF2">
    <property type="entry name" value="CHROMOSOMAL REPLICATION INITIATOR PROTEIN DNAA"/>
    <property type="match status" value="1"/>
</dbReference>
<dbReference type="Pfam" id="PF00308">
    <property type="entry name" value="Bac_DnaA"/>
    <property type="match status" value="1"/>
</dbReference>
<dbReference type="Pfam" id="PF08299">
    <property type="entry name" value="Bac_DnaA_C"/>
    <property type="match status" value="1"/>
</dbReference>
<dbReference type="Pfam" id="PF11638">
    <property type="entry name" value="DnaA_N"/>
    <property type="match status" value="1"/>
</dbReference>
<dbReference type="PRINTS" id="PR00051">
    <property type="entry name" value="DNAA"/>
</dbReference>
<dbReference type="SMART" id="SM00382">
    <property type="entry name" value="AAA"/>
    <property type="match status" value="1"/>
</dbReference>
<dbReference type="SMART" id="SM00760">
    <property type="entry name" value="Bac_DnaA_C"/>
    <property type="match status" value="1"/>
</dbReference>
<dbReference type="SUPFAM" id="SSF52540">
    <property type="entry name" value="P-loop containing nucleoside triphosphate hydrolases"/>
    <property type="match status" value="1"/>
</dbReference>
<dbReference type="SUPFAM" id="SSF48295">
    <property type="entry name" value="TrpR-like"/>
    <property type="match status" value="1"/>
</dbReference>
<dbReference type="PROSITE" id="PS01008">
    <property type="entry name" value="DNAA"/>
    <property type="match status" value="1"/>
</dbReference>
<organism>
    <name type="scientific">Citrifermentans bemidjiense (strain ATCC BAA-1014 / DSM 16622 / JCM 12645 / Bem)</name>
    <name type="common">Geobacter bemidjiensis</name>
    <dbReference type="NCBI Taxonomy" id="404380"/>
    <lineage>
        <taxon>Bacteria</taxon>
        <taxon>Pseudomonadati</taxon>
        <taxon>Thermodesulfobacteriota</taxon>
        <taxon>Desulfuromonadia</taxon>
        <taxon>Geobacterales</taxon>
        <taxon>Geobacteraceae</taxon>
        <taxon>Citrifermentans</taxon>
    </lineage>
</organism>
<accession>B5E7P6</accession>
<keyword id="KW-0067">ATP-binding</keyword>
<keyword id="KW-0963">Cytoplasm</keyword>
<keyword id="KW-0235">DNA replication</keyword>
<keyword id="KW-0238">DNA-binding</keyword>
<keyword id="KW-0446">Lipid-binding</keyword>
<keyword id="KW-0547">Nucleotide-binding</keyword>
<keyword id="KW-1185">Reference proteome</keyword>
<comment type="function">
    <text evidence="1">Plays an essential role in the initiation and regulation of chromosomal replication. ATP-DnaA binds to the origin of replication (oriC) to initiate formation of the DNA replication initiation complex once per cell cycle. Binds the DnaA box (a 9 base pair repeat at the origin) and separates the double-stranded (ds)DNA. Forms a right-handed helical filament on oriC DNA; dsDNA binds to the exterior of the filament while single-stranded (ss)DNA is stabiized in the filament's interior. The ATP-DnaA-oriC complex binds and stabilizes one strand of the AT-rich DNA unwinding element (DUE), permitting loading of DNA polymerase. After initiation quickly degrades to an ADP-DnaA complex that is not apt for DNA replication. Binds acidic phospholipids.</text>
</comment>
<comment type="subunit">
    <text evidence="1">Oligomerizes as a right-handed, spiral filament on DNA at oriC.</text>
</comment>
<comment type="subcellular location">
    <subcellularLocation>
        <location evidence="1">Cytoplasm</location>
    </subcellularLocation>
</comment>
<comment type="domain">
    <text evidence="1">Domain I is involved in oligomerization and binding regulators, domain II is flexibile and of varying length in different bacteria, domain III forms the AAA+ region, while domain IV binds dsDNA.</text>
</comment>
<comment type="similarity">
    <text evidence="1">Belongs to the DnaA family.</text>
</comment>
<reference key="1">
    <citation type="submission" date="2008-07" db="EMBL/GenBank/DDBJ databases">
        <title>Complete sequence of Geobacter bemidjiensis BEM.</title>
        <authorList>
            <consortium name="US DOE Joint Genome Institute"/>
            <person name="Lucas S."/>
            <person name="Copeland A."/>
            <person name="Lapidus A."/>
            <person name="Glavina del Rio T."/>
            <person name="Dalin E."/>
            <person name="Tice H."/>
            <person name="Bruce D."/>
            <person name="Goodwin L."/>
            <person name="Pitluck S."/>
            <person name="Kiss H."/>
            <person name="Brettin T."/>
            <person name="Detter J.C."/>
            <person name="Han C."/>
            <person name="Kuske C.R."/>
            <person name="Schmutz J."/>
            <person name="Larimer F."/>
            <person name="Land M."/>
            <person name="Hauser L."/>
            <person name="Kyrpides N."/>
            <person name="Lykidis A."/>
            <person name="Lovley D."/>
            <person name="Richardson P."/>
        </authorList>
    </citation>
    <scope>NUCLEOTIDE SEQUENCE [LARGE SCALE GENOMIC DNA]</scope>
    <source>
        <strain>ATCC BAA-1014 / DSM 16622 / JCM 12645 / Bem</strain>
    </source>
</reference>
<gene>
    <name evidence="1" type="primary">dnaA</name>
    <name type="ordered locus">Gbem_0001</name>
</gene>
<protein>
    <recommendedName>
        <fullName evidence="1">Chromosomal replication initiator protein DnaA</fullName>
    </recommendedName>
</protein>
<name>DNAA_CITBB</name>
<feature type="chain" id="PRO_1000121983" description="Chromosomal replication initiator protein DnaA">
    <location>
        <begin position="1"/>
        <end position="458"/>
    </location>
</feature>
<feature type="region of interest" description="Domain I, interacts with DnaA modulators" evidence="1">
    <location>
        <begin position="1"/>
        <end position="84"/>
    </location>
</feature>
<feature type="region of interest" description="Disordered" evidence="2">
    <location>
        <begin position="80"/>
        <end position="120"/>
    </location>
</feature>
<feature type="region of interest" description="Domain II" evidence="1">
    <location>
        <begin position="84"/>
        <end position="121"/>
    </location>
</feature>
<feature type="region of interest" description="Domain III, AAA+ region" evidence="1">
    <location>
        <begin position="122"/>
        <end position="338"/>
    </location>
</feature>
<feature type="region of interest" description="Domain IV, binds dsDNA" evidence="1">
    <location>
        <begin position="339"/>
        <end position="458"/>
    </location>
</feature>
<feature type="compositionally biased region" description="Basic and acidic residues" evidence="2">
    <location>
        <begin position="80"/>
        <end position="119"/>
    </location>
</feature>
<feature type="binding site" evidence="1">
    <location>
        <position position="166"/>
    </location>
    <ligand>
        <name>ATP</name>
        <dbReference type="ChEBI" id="CHEBI:30616"/>
    </ligand>
</feature>
<feature type="binding site" evidence="1">
    <location>
        <position position="168"/>
    </location>
    <ligand>
        <name>ATP</name>
        <dbReference type="ChEBI" id="CHEBI:30616"/>
    </ligand>
</feature>
<feature type="binding site" evidence="1">
    <location>
        <position position="169"/>
    </location>
    <ligand>
        <name>ATP</name>
        <dbReference type="ChEBI" id="CHEBI:30616"/>
    </ligand>
</feature>
<feature type="binding site" evidence="1">
    <location>
        <position position="170"/>
    </location>
    <ligand>
        <name>ATP</name>
        <dbReference type="ChEBI" id="CHEBI:30616"/>
    </ligand>
</feature>
<evidence type="ECO:0000255" key="1">
    <source>
        <dbReference type="HAMAP-Rule" id="MF_00377"/>
    </source>
</evidence>
<evidence type="ECO:0000256" key="2">
    <source>
        <dbReference type="SAM" id="MobiDB-lite"/>
    </source>
</evidence>
<sequence>MENIWLEAQTNLKQVLTEQTYSTWIDPLKFLGATVDTIVLEVPSSFFQKWVTDKYLAMIKEAISAVNGKSYQIEFHVAEEKPEAAHEAKPEKEAKPAREKERDKDKEKEKDREKEKKELVPNLNPKYTFESFVSGPSNQFAYAASQAVANKPATNYNPLFIYGGVGLGKTHLVNAIGNHILAKNPKAKICYYSSEKFMNEMINSLRYKKMDEFRNKFRKMDLLLIDDIQFMAGKEATQEEFFHTFNALYESHKQIVVTSDKFPKDIPGLEERLRSRFEWGLIADIQPPGVETKVAILKKKSDMHAVNLPDDVALFLAEGANSNIRELEGMLIRLEAFASLTGQEITLSMAREVMKDIIVEKTRDITVEMIQKTVAEHFRIKVSELKSDKRIKTLVVPRQIAIYICRELTKASYPEIGEKFGGKDHSTIIHSVKKIEKQIAGDDEFKATVEDIRKKLFT</sequence>